<dbReference type="EC" id="3.4.21.21"/>
<dbReference type="EMBL" id="DQ142914">
    <property type="protein sequence ID" value="ABD17894.1"/>
    <property type="molecule type" value="Genomic_DNA"/>
</dbReference>
<dbReference type="EMBL" id="DQ142915">
    <property type="protein sequence ID" value="ABD17895.1"/>
    <property type="molecule type" value="Genomic_DNA"/>
</dbReference>
<dbReference type="FunCoup" id="Q2F9P2">
    <property type="interactions" value="344"/>
</dbReference>
<dbReference type="STRING" id="9598.ENSPTRP00000072813"/>
<dbReference type="MEROPS" id="S01.215"/>
<dbReference type="GlyCosmos" id="Q2F9P2">
    <property type="glycosylation" value="4 sites, No reported glycans"/>
</dbReference>
<dbReference type="PaxDb" id="9598-ENSPTRP00000010284"/>
<dbReference type="eggNOG" id="ENOG502QRGI">
    <property type="taxonomic scope" value="Eukaryota"/>
</dbReference>
<dbReference type="InParanoid" id="Q2F9P2"/>
<dbReference type="Proteomes" id="UP000002277">
    <property type="component" value="Unplaced"/>
</dbReference>
<dbReference type="GO" id="GO:0005615">
    <property type="term" value="C:extracellular space"/>
    <property type="evidence" value="ECO:0000318"/>
    <property type="project" value="GO_Central"/>
</dbReference>
<dbReference type="GO" id="GO:0005796">
    <property type="term" value="C:Golgi lumen"/>
    <property type="evidence" value="ECO:0007669"/>
    <property type="project" value="UniProtKB-ARBA"/>
</dbReference>
<dbReference type="GO" id="GO:0005509">
    <property type="term" value="F:calcium ion binding"/>
    <property type="evidence" value="ECO:0007669"/>
    <property type="project" value="InterPro"/>
</dbReference>
<dbReference type="GO" id="GO:0004252">
    <property type="term" value="F:serine-type endopeptidase activity"/>
    <property type="evidence" value="ECO:0000318"/>
    <property type="project" value="GO_Central"/>
</dbReference>
<dbReference type="GO" id="GO:0007596">
    <property type="term" value="P:blood coagulation"/>
    <property type="evidence" value="ECO:0000318"/>
    <property type="project" value="GO_Central"/>
</dbReference>
<dbReference type="GO" id="GO:0002690">
    <property type="term" value="P:positive regulation of leukocyte chemotaxis"/>
    <property type="evidence" value="ECO:0000318"/>
    <property type="project" value="GO_Central"/>
</dbReference>
<dbReference type="GO" id="GO:0006508">
    <property type="term" value="P:proteolysis"/>
    <property type="evidence" value="ECO:0007669"/>
    <property type="project" value="UniProtKB-KW"/>
</dbReference>
<dbReference type="CDD" id="cd00054">
    <property type="entry name" value="EGF_CA"/>
    <property type="match status" value="1"/>
</dbReference>
<dbReference type="CDD" id="cd00190">
    <property type="entry name" value="Tryp_SPc"/>
    <property type="match status" value="1"/>
</dbReference>
<dbReference type="FunFam" id="2.10.25.10:FF:000259">
    <property type="entry name" value="Coagulation factor VII"/>
    <property type="match status" value="1"/>
</dbReference>
<dbReference type="FunFam" id="2.10.25.10:FF:000420">
    <property type="entry name" value="Coagulation factor VII"/>
    <property type="match status" value="1"/>
</dbReference>
<dbReference type="FunFam" id="2.40.10.10:FF:000013">
    <property type="entry name" value="Coagulation factor X"/>
    <property type="match status" value="1"/>
</dbReference>
<dbReference type="FunFam" id="4.10.740.10:FF:000001">
    <property type="entry name" value="vitamin K-dependent protein S"/>
    <property type="match status" value="1"/>
</dbReference>
<dbReference type="Gene3D" id="4.10.740.10">
    <property type="entry name" value="Coagulation Factor IX"/>
    <property type="match status" value="1"/>
</dbReference>
<dbReference type="Gene3D" id="2.10.25.10">
    <property type="entry name" value="Laminin"/>
    <property type="match status" value="2"/>
</dbReference>
<dbReference type="Gene3D" id="2.40.10.10">
    <property type="entry name" value="Trypsin-like serine proteases"/>
    <property type="match status" value="2"/>
</dbReference>
<dbReference type="InterPro" id="IPR017857">
    <property type="entry name" value="Coagulation_fac-like_Gla_dom"/>
</dbReference>
<dbReference type="InterPro" id="IPR001881">
    <property type="entry name" value="EGF-like_Ca-bd_dom"/>
</dbReference>
<dbReference type="InterPro" id="IPR000742">
    <property type="entry name" value="EGF-like_dom"/>
</dbReference>
<dbReference type="InterPro" id="IPR000152">
    <property type="entry name" value="EGF-type_Asp/Asn_hydroxyl_site"/>
</dbReference>
<dbReference type="InterPro" id="IPR018097">
    <property type="entry name" value="EGF_Ca-bd_CS"/>
</dbReference>
<dbReference type="InterPro" id="IPR035972">
    <property type="entry name" value="GLA-like_dom_SF"/>
</dbReference>
<dbReference type="InterPro" id="IPR000294">
    <property type="entry name" value="GLA_domain"/>
</dbReference>
<dbReference type="InterPro" id="IPR012224">
    <property type="entry name" value="Pept_S1A_FX"/>
</dbReference>
<dbReference type="InterPro" id="IPR050442">
    <property type="entry name" value="Peptidase_S1_coag_factors"/>
</dbReference>
<dbReference type="InterPro" id="IPR009003">
    <property type="entry name" value="Peptidase_S1_PA"/>
</dbReference>
<dbReference type="InterPro" id="IPR043504">
    <property type="entry name" value="Peptidase_S1_PA_chymotrypsin"/>
</dbReference>
<dbReference type="InterPro" id="IPR001314">
    <property type="entry name" value="Peptidase_S1A"/>
</dbReference>
<dbReference type="InterPro" id="IPR001254">
    <property type="entry name" value="Trypsin_dom"/>
</dbReference>
<dbReference type="InterPro" id="IPR018114">
    <property type="entry name" value="TRYPSIN_HIS"/>
</dbReference>
<dbReference type="InterPro" id="IPR033116">
    <property type="entry name" value="TRYPSIN_SER"/>
</dbReference>
<dbReference type="PANTHER" id="PTHR24278">
    <property type="entry name" value="COAGULATION FACTOR"/>
    <property type="match status" value="1"/>
</dbReference>
<dbReference type="PANTHER" id="PTHR24278:SF26">
    <property type="entry name" value="COAGULATION FACTOR VII"/>
    <property type="match status" value="1"/>
</dbReference>
<dbReference type="Pfam" id="PF00008">
    <property type="entry name" value="EGF"/>
    <property type="match status" value="1"/>
</dbReference>
<dbReference type="Pfam" id="PF14670">
    <property type="entry name" value="FXa_inhibition"/>
    <property type="match status" value="1"/>
</dbReference>
<dbReference type="Pfam" id="PF00594">
    <property type="entry name" value="Gla"/>
    <property type="match status" value="1"/>
</dbReference>
<dbReference type="Pfam" id="PF00089">
    <property type="entry name" value="Trypsin"/>
    <property type="match status" value="1"/>
</dbReference>
<dbReference type="PIRSF" id="PIRSF001143">
    <property type="entry name" value="Factor_X"/>
    <property type="match status" value="1"/>
</dbReference>
<dbReference type="PRINTS" id="PR00722">
    <property type="entry name" value="CHYMOTRYPSIN"/>
</dbReference>
<dbReference type="PRINTS" id="PR00010">
    <property type="entry name" value="EGFBLOOD"/>
</dbReference>
<dbReference type="PRINTS" id="PR00001">
    <property type="entry name" value="GLABLOOD"/>
</dbReference>
<dbReference type="SMART" id="SM00181">
    <property type="entry name" value="EGF"/>
    <property type="match status" value="2"/>
</dbReference>
<dbReference type="SMART" id="SM00179">
    <property type="entry name" value="EGF_CA"/>
    <property type="match status" value="1"/>
</dbReference>
<dbReference type="SMART" id="SM00069">
    <property type="entry name" value="GLA"/>
    <property type="match status" value="1"/>
</dbReference>
<dbReference type="SMART" id="SM00020">
    <property type="entry name" value="Tryp_SPc"/>
    <property type="match status" value="1"/>
</dbReference>
<dbReference type="SUPFAM" id="SSF57630">
    <property type="entry name" value="GLA-domain"/>
    <property type="match status" value="1"/>
</dbReference>
<dbReference type="SUPFAM" id="SSF50494">
    <property type="entry name" value="Trypsin-like serine proteases"/>
    <property type="match status" value="1"/>
</dbReference>
<dbReference type="PROSITE" id="PS00010">
    <property type="entry name" value="ASX_HYDROXYL"/>
    <property type="match status" value="1"/>
</dbReference>
<dbReference type="PROSITE" id="PS00022">
    <property type="entry name" value="EGF_1"/>
    <property type="match status" value="1"/>
</dbReference>
<dbReference type="PROSITE" id="PS01186">
    <property type="entry name" value="EGF_2"/>
    <property type="match status" value="1"/>
</dbReference>
<dbReference type="PROSITE" id="PS50026">
    <property type="entry name" value="EGF_3"/>
    <property type="match status" value="1"/>
</dbReference>
<dbReference type="PROSITE" id="PS01187">
    <property type="entry name" value="EGF_CA"/>
    <property type="match status" value="1"/>
</dbReference>
<dbReference type="PROSITE" id="PS00011">
    <property type="entry name" value="GLA_1"/>
    <property type="match status" value="1"/>
</dbReference>
<dbReference type="PROSITE" id="PS50998">
    <property type="entry name" value="GLA_2"/>
    <property type="match status" value="1"/>
</dbReference>
<dbReference type="PROSITE" id="PS50240">
    <property type="entry name" value="TRYPSIN_DOM"/>
    <property type="match status" value="1"/>
</dbReference>
<dbReference type="PROSITE" id="PS00134">
    <property type="entry name" value="TRYPSIN_HIS"/>
    <property type="match status" value="1"/>
</dbReference>
<dbReference type="PROSITE" id="PS00135">
    <property type="entry name" value="TRYPSIN_SER"/>
    <property type="match status" value="1"/>
</dbReference>
<gene>
    <name type="primary">F7</name>
</gene>
<protein>
    <recommendedName>
        <fullName>Coagulation factor VII</fullName>
        <ecNumber>3.4.21.21</ecNumber>
    </recommendedName>
    <alternativeName>
        <fullName>Serum prothrombin conversion accelerator</fullName>
    </alternativeName>
    <component>
        <recommendedName>
            <fullName>Factor VII light chain</fullName>
        </recommendedName>
    </component>
    <component>
        <recommendedName>
            <fullName>Factor VII heavy chain</fullName>
        </recommendedName>
    </component>
</protein>
<proteinExistence type="inferred from homology"/>
<name>FA7_PANTR</name>
<comment type="function">
    <text evidence="1">Initiates the extrinsic pathway of blood coagulation. Serine protease that circulates in the blood in a zymogen form. Factor VII is converted to factor VIIa by factor Xa, factor XIIa, factor IXa, or thrombin by minor proteolysis. In the presence of tissue factor and calcium ions, factor VIIa then converts factor X to factor Xa by limited proteolysis. Factor VIIa also converts factor IX to factor IXa in the presence of tissue factor and calcium (By similarity).</text>
</comment>
<comment type="catalytic activity">
    <reaction>
        <text>Selective cleavage of Arg-|-Ile bond in factor X to form factor Xa.</text>
        <dbReference type="EC" id="3.4.21.21"/>
    </reaction>
</comment>
<comment type="subunit">
    <text evidence="1">Heterodimer of a light chain and a heavy chain linked by a disulfide bond.</text>
</comment>
<comment type="subcellular location">
    <subcellularLocation>
        <location evidence="1">Secreted</location>
    </subcellularLocation>
</comment>
<comment type="PTM">
    <text evidence="1">The vitamin K-dependent, enzymatic carboxylation of some glutamate residues allows the modified protein to bind calcium.</text>
</comment>
<comment type="PTM">
    <text evidence="1">The iron and 2-oxoglutarate dependent 3-hydroxylation of aspartate and asparagine is (R) stereospecific within EGF domains.</text>
</comment>
<comment type="PTM">
    <text evidence="1">O-glycosylated. O-fucosylated by POFUT1 on a conserved serine or threonine residue found in the consensus sequence C2-X(4,5)-[S/T]-C3 of EGF domains, where C2 and C3 are the second and third conserved cysteines.</text>
</comment>
<comment type="PTM">
    <text evidence="1">Can be either O-glucosylated or O-xylosylated at Ser-112 by POGLUT1.</text>
</comment>
<comment type="similarity">
    <text evidence="6">Belongs to the peptidase S1 family.</text>
</comment>
<feature type="signal peptide" evidence="4">
    <location>
        <begin position="1"/>
        <end position="20"/>
    </location>
</feature>
<feature type="propeptide" id="PRO_0000235182" evidence="1">
    <location>
        <begin position="21"/>
        <end position="60"/>
    </location>
</feature>
<feature type="chain" id="PRO_0000235183" description="Factor VII light chain">
    <location>
        <begin position="61"/>
        <end position="212"/>
    </location>
</feature>
<feature type="chain" id="PRO_0000235184" description="Factor VII heavy chain">
    <location>
        <begin position="213"/>
        <end position="466"/>
    </location>
</feature>
<feature type="domain" description="Gla" evidence="7">
    <location>
        <begin position="61"/>
        <end position="105"/>
    </location>
</feature>
<feature type="domain" description="EGF-like 1; calcium-binding" evidence="5">
    <location>
        <begin position="106"/>
        <end position="142"/>
    </location>
</feature>
<feature type="domain" description="EGF-like 2" evidence="5">
    <location>
        <begin position="147"/>
        <end position="188"/>
    </location>
</feature>
<feature type="domain" description="Peptidase S1" evidence="6">
    <location>
        <begin position="213"/>
        <end position="452"/>
    </location>
</feature>
<feature type="active site" description="Charge relay system" evidence="1">
    <location>
        <position position="253"/>
    </location>
</feature>
<feature type="active site" description="Charge relay system" evidence="1">
    <location>
        <position position="302"/>
    </location>
</feature>
<feature type="active site" description="Charge relay system" evidence="1">
    <location>
        <position position="404"/>
    </location>
</feature>
<feature type="binding site" evidence="1">
    <location>
        <position position="398"/>
    </location>
    <ligand>
        <name>substrate</name>
    </ligand>
</feature>
<feature type="site" description="Important for S-112 for O-xylosylation">
    <location>
        <position position="113"/>
    </location>
</feature>
<feature type="site" description="Cleavage; by factor Xa, factor XIIa, factor IXa, or thrombin" evidence="1">
    <location>
        <begin position="212"/>
        <end position="213"/>
    </location>
</feature>
<feature type="modified residue" description="4-carboxyglutamate" evidence="3 7">
    <location>
        <position position="66"/>
    </location>
</feature>
<feature type="modified residue" description="4-carboxyglutamate" evidence="3 7">
    <location>
        <position position="67"/>
    </location>
</feature>
<feature type="modified residue" description="4-carboxyglutamate" evidence="3 7">
    <location>
        <position position="74"/>
    </location>
</feature>
<feature type="modified residue" description="4-carboxyglutamate" evidence="3 7">
    <location>
        <position position="76"/>
    </location>
</feature>
<feature type="modified residue" description="4-carboxyglutamate" evidence="3 7">
    <location>
        <position position="79"/>
    </location>
</feature>
<feature type="modified residue" description="4-carboxyglutamate" evidence="3 7">
    <location>
        <position position="80"/>
    </location>
</feature>
<feature type="modified residue" description="4-carboxyglutamate" evidence="3 7">
    <location>
        <position position="85"/>
    </location>
</feature>
<feature type="modified residue" description="4-carboxyglutamate" evidence="3 7">
    <location>
        <position position="86"/>
    </location>
</feature>
<feature type="modified residue" description="4-carboxyglutamate" evidence="3 7">
    <location>
        <position position="89"/>
    </location>
</feature>
<feature type="modified residue" description="4-carboxyglutamate" evidence="3 7">
    <location>
        <position position="95"/>
    </location>
</feature>
<feature type="modified residue" description="(3R)-3-hydroxyaspartate" evidence="1">
    <location>
        <position position="123"/>
    </location>
</feature>
<feature type="glycosylation site" description="O-linked (Glc...) serine; alternate" evidence="2">
    <location>
        <position position="112"/>
    </location>
</feature>
<feature type="glycosylation site" description="O-linked (Xyl...) serine; alternate" evidence="2">
    <location>
        <position position="112"/>
    </location>
</feature>
<feature type="glycosylation site" description="O-linked (Fuc) serine" evidence="1">
    <location>
        <position position="120"/>
    </location>
</feature>
<feature type="glycosylation site" description="N-linked (GlcNAc...) asparagine" evidence="4">
    <location>
        <position position="205"/>
    </location>
</feature>
<feature type="glycosylation site" description="N-linked (GlcNAc...) asparagine" evidence="4">
    <location>
        <position position="382"/>
    </location>
</feature>
<feature type="disulfide bond" evidence="1">
    <location>
        <begin position="77"/>
        <end position="82"/>
    </location>
</feature>
<feature type="disulfide bond" evidence="1">
    <location>
        <begin position="110"/>
        <end position="121"/>
    </location>
</feature>
<feature type="disulfide bond" evidence="1">
    <location>
        <begin position="115"/>
        <end position="130"/>
    </location>
</feature>
<feature type="disulfide bond" evidence="1">
    <location>
        <begin position="132"/>
        <end position="141"/>
    </location>
</feature>
<feature type="disulfide bond" evidence="1">
    <location>
        <begin position="151"/>
        <end position="162"/>
    </location>
</feature>
<feature type="disulfide bond" evidence="1">
    <location>
        <begin position="158"/>
        <end position="172"/>
    </location>
</feature>
<feature type="disulfide bond" evidence="1">
    <location>
        <begin position="174"/>
        <end position="187"/>
    </location>
</feature>
<feature type="disulfide bond" evidence="1">
    <location>
        <begin position="195"/>
        <end position="322"/>
    </location>
</feature>
<feature type="disulfide bond" evidence="1">
    <location>
        <begin position="219"/>
        <end position="224"/>
    </location>
</feature>
<feature type="disulfide bond" evidence="1">
    <location>
        <begin position="238"/>
        <end position="254"/>
    </location>
</feature>
<feature type="disulfide bond" evidence="1">
    <location>
        <begin position="370"/>
        <end position="389"/>
    </location>
</feature>
<feature type="disulfide bond" evidence="1">
    <location>
        <begin position="400"/>
        <end position="428"/>
    </location>
</feature>
<accession>Q2F9P2</accession>
<evidence type="ECO:0000250" key="1"/>
<evidence type="ECO:0000250" key="2">
    <source>
        <dbReference type="UniProtKB" id="P08709"/>
    </source>
</evidence>
<evidence type="ECO:0000250" key="3">
    <source>
        <dbReference type="UniProtKB" id="P22457"/>
    </source>
</evidence>
<evidence type="ECO:0000255" key="4"/>
<evidence type="ECO:0000255" key="5">
    <source>
        <dbReference type="PROSITE-ProRule" id="PRU00076"/>
    </source>
</evidence>
<evidence type="ECO:0000255" key="6">
    <source>
        <dbReference type="PROSITE-ProRule" id="PRU00274"/>
    </source>
</evidence>
<evidence type="ECO:0000255" key="7">
    <source>
        <dbReference type="PROSITE-ProRule" id="PRU00463"/>
    </source>
</evidence>
<organism>
    <name type="scientific">Pan troglodytes</name>
    <name type="common">Chimpanzee</name>
    <dbReference type="NCBI Taxonomy" id="9598"/>
    <lineage>
        <taxon>Eukaryota</taxon>
        <taxon>Metazoa</taxon>
        <taxon>Chordata</taxon>
        <taxon>Craniata</taxon>
        <taxon>Vertebrata</taxon>
        <taxon>Euteleostomi</taxon>
        <taxon>Mammalia</taxon>
        <taxon>Eutheria</taxon>
        <taxon>Euarchontoglires</taxon>
        <taxon>Primates</taxon>
        <taxon>Haplorrhini</taxon>
        <taxon>Catarrhini</taxon>
        <taxon>Hominidae</taxon>
        <taxon>Pan</taxon>
    </lineage>
</organism>
<sequence length="466" mass="51641">MVSQALRLLCLLLGLQGCLAAGGVAEASGGETRDXXWKPGPHRVFITQEEAHGVLHRRRRANAFLEELRPGSLERECKEEQCSFEEAREIFKDLERTKLFWISYSDGDQCASSPCQNGGSCKDQLQSYICFCLPAFEGRNCETYKDDQLICVNENGGCEQYCSDHTGTKRSCRCHEGYSLLADGVSCTPTVEYPCGKIPILEKRNASKPQGRIVGGKVCPKGECPWQVLLLVNGAQLCGGTLINTIWVVSAAHCFDKIKNWRNLIAVLGEHDLSEHDGDEQSRRVAQVIIPSTYIPGTTNHDIALLRLHQPVVLTDHVVPLCLPERAFSERTLAFVRFSLVSGWGQLLDRGATALELMVLNVPRLMTQDCLQQSRKVGDSPNITEYMFCAGYSDGSKDSCKGDSGGPHATHYRGTWYLTGIVSWGQGCASVGHFGVYTRVSQYIEWLQKLMRSEPRPGVLLRAPFP</sequence>
<reference key="1">
    <citation type="journal article" date="2006" name="Hum. Genet.">
        <title>Human F7 sequence is split into three deep clades that are related to FVII plasma levels.</title>
        <authorList>
            <person name="Sabater-Lleal M."/>
            <person name="Soria J.M."/>
            <person name="Bertranpetit J."/>
            <person name="Almasy L."/>
            <person name="Blangero J."/>
            <person name="Fontcuberta J."/>
            <person name="Calafell F."/>
        </authorList>
    </citation>
    <scope>NUCLEOTIDE SEQUENCE [GENOMIC DNA]</scope>
</reference>
<keyword id="KW-0094">Blood coagulation</keyword>
<keyword id="KW-0106">Calcium</keyword>
<keyword id="KW-0165">Cleavage on pair of basic residues</keyword>
<keyword id="KW-1015">Disulfide bond</keyword>
<keyword id="KW-0245">EGF-like domain</keyword>
<keyword id="KW-0301">Gamma-carboxyglutamic acid</keyword>
<keyword id="KW-0325">Glycoprotein</keyword>
<keyword id="KW-0356">Hemostasis</keyword>
<keyword id="KW-0378">Hydrolase</keyword>
<keyword id="KW-0379">Hydroxylation</keyword>
<keyword id="KW-0645">Protease</keyword>
<keyword id="KW-1185">Reference proteome</keyword>
<keyword id="KW-0677">Repeat</keyword>
<keyword id="KW-0964">Secreted</keyword>
<keyword id="KW-0720">Serine protease</keyword>
<keyword id="KW-0732">Signal</keyword>
<keyword id="KW-0865">Zymogen</keyword>